<comment type="similarity">
    <text evidence="2">Belongs to the eukaryotic ribosomal protein eS25 family.</text>
</comment>
<feature type="chain" id="PRO_0000192880" description="Small ribosomal subunit protein eS25">
    <location>
        <begin position="1"/>
        <end position="120"/>
    </location>
</feature>
<feature type="region of interest" description="Disordered" evidence="1">
    <location>
        <begin position="1"/>
        <end position="32"/>
    </location>
</feature>
<feature type="compositionally biased region" description="Basic residues" evidence="1">
    <location>
        <begin position="19"/>
        <end position="28"/>
    </location>
</feature>
<keyword id="KW-1185">Reference proteome</keyword>
<keyword id="KW-0687">Ribonucleoprotein</keyword>
<keyword id="KW-0689">Ribosomal protein</keyword>
<reference key="1">
    <citation type="journal article" date="2003" name="Mem. Inst. Oswaldo Cruz">
        <title>Reverse transcription-polymerase chain reaction construction of plasmid-based, full-length cDNA libraries from Leishmania infantum for in vitro expression screening.</title>
        <authorList>
            <person name="Couvreur B."/>
            <person name="Bollen A."/>
            <person name="le Ray D."/>
            <person name="Dujardin J.C."/>
        </authorList>
    </citation>
    <scope>NUCLEOTIDE SEQUENCE [MRNA] (RPS25)</scope>
    <source>
        <strain>MHOM/67/MA</strain>
    </source>
</reference>
<reference key="2">
    <citation type="journal article" date="2007" name="Nat. Genet.">
        <title>Comparative genomic analysis of three Leishmania species that cause diverse human disease.</title>
        <authorList>
            <person name="Peacock C.S."/>
            <person name="Seeger K."/>
            <person name="Harris D."/>
            <person name="Murphy L."/>
            <person name="Ruiz J.C."/>
            <person name="Quail M.A."/>
            <person name="Peters N."/>
            <person name="Adlem E."/>
            <person name="Tivey A."/>
            <person name="Aslett M."/>
            <person name="Kerhornou A."/>
            <person name="Ivens A."/>
            <person name="Fraser A."/>
            <person name="Rajandream M.-A."/>
            <person name="Carver T."/>
            <person name="Norbertczak H."/>
            <person name="Chillingworth T."/>
            <person name="Hance Z."/>
            <person name="Jagels K."/>
            <person name="Moule S."/>
            <person name="Ormond D."/>
            <person name="Rutter S."/>
            <person name="Sqaures R."/>
            <person name="Whitehead S."/>
            <person name="Rabbinowitsch E."/>
            <person name="Arrowsmith C."/>
            <person name="White B."/>
            <person name="Thurston S."/>
            <person name="Bringaud F."/>
            <person name="Baldauf S.L."/>
            <person name="Faulconbridge A."/>
            <person name="Jeffares D."/>
            <person name="Depledge D.P."/>
            <person name="Oyola S.O."/>
            <person name="Hilley J.D."/>
            <person name="Brito L.O."/>
            <person name="Tosi L.R.O."/>
            <person name="Barrell B."/>
            <person name="Cruz A.K."/>
            <person name="Mottram J.C."/>
            <person name="Smith D.F."/>
            <person name="Berriman M."/>
        </authorList>
    </citation>
    <scope>NUCLEOTIDE SEQUENCE [LARGE SCALE GENOMIC DNA] (RPS25 AND LINJ25.1230)</scope>
    <source>
        <strain>JPCM5</strain>
    </source>
</reference>
<proteinExistence type="evidence at transcript level"/>
<gene>
    <name type="primary">RPS25</name>
    <name type="ORF">LinJ34.0460</name>
    <name type="ORF">LinJ_34_0460</name>
</gene>
<gene>
    <name type="ORF">LinJ25.1230</name>
    <name type="ORF">LinJ_25_1220</name>
</gene>
<dbReference type="EMBL" id="AJ278541">
    <property type="protein sequence ID" value="CAB95735.1"/>
    <property type="molecule type" value="mRNA"/>
</dbReference>
<dbReference type="EMBL" id="FR796457">
    <property type="protein sequence ID" value="CAM68592.1"/>
    <property type="molecule type" value="Genomic_DNA"/>
</dbReference>
<dbReference type="EMBL" id="FR796466">
    <property type="protein sequence ID" value="CAM71517.1"/>
    <property type="molecule type" value="Genomic_DNA"/>
</dbReference>
<dbReference type="RefSeq" id="XP_001466153.1">
    <property type="nucleotide sequence ID" value="XM_001466116.1"/>
</dbReference>
<dbReference type="SMR" id="Q9N9V4"/>
<dbReference type="FunCoup" id="Q9N9V4">
    <property type="interactions" value="364"/>
</dbReference>
<dbReference type="STRING" id="5671.Q9N9V4"/>
<dbReference type="GeneID" id="5069588"/>
<dbReference type="KEGG" id="lif:LINJ_25_1220"/>
<dbReference type="KEGG" id="lif:LINJ_34_0460"/>
<dbReference type="VEuPathDB" id="TriTrypDB:LINF_340009500"/>
<dbReference type="eggNOG" id="KOG1767">
    <property type="taxonomic scope" value="Eukaryota"/>
</dbReference>
<dbReference type="InParanoid" id="Q9N9V4"/>
<dbReference type="OMA" id="CASAYEM"/>
<dbReference type="Proteomes" id="UP000008153">
    <property type="component" value="Chromosome 25"/>
</dbReference>
<dbReference type="Proteomes" id="UP000008153">
    <property type="component" value="Chromosome 34"/>
</dbReference>
<dbReference type="GO" id="GO:1990904">
    <property type="term" value="C:ribonucleoprotein complex"/>
    <property type="evidence" value="ECO:0007669"/>
    <property type="project" value="UniProtKB-KW"/>
</dbReference>
<dbReference type="GO" id="GO:0005840">
    <property type="term" value="C:ribosome"/>
    <property type="evidence" value="ECO:0007669"/>
    <property type="project" value="UniProtKB-KW"/>
</dbReference>
<dbReference type="FunFam" id="1.10.10.10:FF:000678">
    <property type="entry name" value="Ribosomal protein S25"/>
    <property type="match status" value="1"/>
</dbReference>
<dbReference type="Gene3D" id="1.10.10.10">
    <property type="entry name" value="Winged helix-like DNA-binding domain superfamily/Winged helix DNA-binding domain"/>
    <property type="match status" value="1"/>
</dbReference>
<dbReference type="InterPro" id="IPR004977">
    <property type="entry name" value="Ribosomal_eS25"/>
</dbReference>
<dbReference type="InterPro" id="IPR036388">
    <property type="entry name" value="WH-like_DNA-bd_sf"/>
</dbReference>
<dbReference type="PANTHER" id="PTHR12850">
    <property type="entry name" value="40S RIBOSOMAL PROTEIN S25"/>
    <property type="match status" value="1"/>
</dbReference>
<dbReference type="Pfam" id="PF03297">
    <property type="entry name" value="Ribosomal_S25"/>
    <property type="match status" value="1"/>
</dbReference>
<organism>
    <name type="scientific">Leishmania infantum</name>
    <dbReference type="NCBI Taxonomy" id="5671"/>
    <lineage>
        <taxon>Eukaryota</taxon>
        <taxon>Discoba</taxon>
        <taxon>Euglenozoa</taxon>
        <taxon>Kinetoplastea</taxon>
        <taxon>Metakinetoplastina</taxon>
        <taxon>Trypanosomatida</taxon>
        <taxon>Trypanosomatidae</taxon>
        <taxon>Leishmaniinae</taxon>
        <taxon>Leishmania</taxon>
    </lineage>
</organism>
<protein>
    <recommendedName>
        <fullName evidence="2">Small ribosomal subunit protein eS25</fullName>
    </recommendedName>
    <alternativeName>
        <fullName>40S ribosomal protein S25</fullName>
    </alternativeName>
</protein>
<accession>Q9N9V4</accession>
<accession>A4I1G2</accession>
<sequence length="120" mass="13046">MPPKAGQTKKAKMEAANKGAKKTTKKWSKGQSREALQNAVMFDKETYDKLRSEVPKYKLITPSIISDRLKIAVSIAAAGLKQLCREKLIRLVSCSSKTRVYTRIVQAAPAEAAAAAPAAE</sequence>
<evidence type="ECO:0000256" key="1">
    <source>
        <dbReference type="SAM" id="MobiDB-lite"/>
    </source>
</evidence>
<evidence type="ECO:0000305" key="2"/>
<name>RS25_LEIIN</name>